<name>RUVC_NEOSM</name>
<sequence length="166" mass="18019">MSYVALGVDPGLLRTGWAVVEYDGLCNVRYIDSGIVKTASQGSLSARLEKIHRGISDVIEKVNPSVAVLEKVFVNNNPYSSLNLAYCRGALILTLALKGLFIVEFAPSVLKKRITGNGRATKAQVKYMVEQLLGLDPCLSKYSDLYDALALAASVTRYDIMEAKGT</sequence>
<comment type="function">
    <text evidence="1">The RuvA-RuvB-RuvC complex processes Holliday junction (HJ) DNA during genetic recombination and DNA repair. Endonuclease that resolves HJ intermediates. Cleaves cruciform DNA by making single-stranded nicks across the HJ at symmetrical positions within the homologous arms, yielding a 5'-phosphate and a 3'-hydroxyl group; requires a central core of homology in the junction. The consensus cleavage sequence is 5'-(A/T)TT(C/G)-3'. Cleavage occurs on the 3'-side of the TT dinucleotide at the point of strand exchange. HJ branch migration catalyzed by RuvA-RuvB allows RuvC to scan DNA until it finds its consensus sequence, where it cleaves and resolves the cruciform DNA.</text>
</comment>
<comment type="catalytic activity">
    <reaction evidence="1">
        <text>Endonucleolytic cleavage at a junction such as a reciprocal single-stranded crossover between two homologous DNA duplexes (Holliday junction).</text>
        <dbReference type="EC" id="3.1.21.10"/>
    </reaction>
</comment>
<comment type="cofactor">
    <cofactor evidence="1">
        <name>Mg(2+)</name>
        <dbReference type="ChEBI" id="CHEBI:18420"/>
    </cofactor>
    <text evidence="1">Binds 2 Mg(2+) ion per subunit.</text>
</comment>
<comment type="subunit">
    <text evidence="1">Homodimer which binds Holliday junction (HJ) DNA. The HJ becomes 2-fold symmetrical on binding to RuvC with unstacked arms; it has a different conformation from HJ DNA in complex with RuvA. In the full resolvosome a probable DNA-RuvA(4)-RuvB(12)-RuvC(2) complex forms which resolves the HJ.</text>
</comment>
<comment type="subcellular location">
    <subcellularLocation>
        <location evidence="1">Cytoplasm</location>
    </subcellularLocation>
</comment>
<comment type="similarity">
    <text evidence="1">Belongs to the RuvC family.</text>
</comment>
<protein>
    <recommendedName>
        <fullName evidence="1">Crossover junction endodeoxyribonuclease RuvC</fullName>
        <ecNumber evidence="1">3.1.21.10</ecNumber>
    </recommendedName>
    <alternativeName>
        <fullName evidence="1">Holliday junction nuclease RuvC</fullName>
    </alternativeName>
    <alternativeName>
        <fullName evidence="1">Holliday junction resolvase RuvC</fullName>
    </alternativeName>
</protein>
<organism>
    <name type="scientific">Neorickettsia sennetsu (strain ATCC VR-367 / Miyayama)</name>
    <name type="common">Ehrlichia sennetsu</name>
    <dbReference type="NCBI Taxonomy" id="222891"/>
    <lineage>
        <taxon>Bacteria</taxon>
        <taxon>Pseudomonadati</taxon>
        <taxon>Pseudomonadota</taxon>
        <taxon>Alphaproteobacteria</taxon>
        <taxon>Rickettsiales</taxon>
        <taxon>Anaplasmataceae</taxon>
        <taxon>Neorickettsia</taxon>
    </lineage>
</organism>
<evidence type="ECO:0000255" key="1">
    <source>
        <dbReference type="HAMAP-Rule" id="MF_00034"/>
    </source>
</evidence>
<proteinExistence type="inferred from homology"/>
<accession>Q2GCH7</accession>
<keyword id="KW-0963">Cytoplasm</keyword>
<keyword id="KW-0227">DNA damage</keyword>
<keyword id="KW-0233">DNA recombination</keyword>
<keyword id="KW-0234">DNA repair</keyword>
<keyword id="KW-0238">DNA-binding</keyword>
<keyword id="KW-0255">Endonuclease</keyword>
<keyword id="KW-0378">Hydrolase</keyword>
<keyword id="KW-0460">Magnesium</keyword>
<keyword id="KW-0479">Metal-binding</keyword>
<keyword id="KW-0540">Nuclease</keyword>
<dbReference type="EC" id="3.1.21.10" evidence="1"/>
<dbReference type="EMBL" id="CP000237">
    <property type="protein sequence ID" value="ABD46339.1"/>
    <property type="molecule type" value="Genomic_DNA"/>
</dbReference>
<dbReference type="RefSeq" id="WP_011452325.1">
    <property type="nucleotide sequence ID" value="NC_007798.1"/>
</dbReference>
<dbReference type="SMR" id="Q2GCH7"/>
<dbReference type="STRING" id="222891.NSE_0955"/>
<dbReference type="KEGG" id="nse:NSE_0955"/>
<dbReference type="eggNOG" id="COG0817">
    <property type="taxonomic scope" value="Bacteria"/>
</dbReference>
<dbReference type="HOGENOM" id="CLU_091257_3_0_5"/>
<dbReference type="OrthoDB" id="9805499at2"/>
<dbReference type="Proteomes" id="UP000001942">
    <property type="component" value="Chromosome"/>
</dbReference>
<dbReference type="GO" id="GO:0005737">
    <property type="term" value="C:cytoplasm"/>
    <property type="evidence" value="ECO:0007669"/>
    <property type="project" value="UniProtKB-SubCell"/>
</dbReference>
<dbReference type="GO" id="GO:0048476">
    <property type="term" value="C:Holliday junction resolvase complex"/>
    <property type="evidence" value="ECO:0007669"/>
    <property type="project" value="UniProtKB-UniRule"/>
</dbReference>
<dbReference type="GO" id="GO:0008821">
    <property type="term" value="F:crossover junction DNA endonuclease activity"/>
    <property type="evidence" value="ECO:0007669"/>
    <property type="project" value="UniProtKB-UniRule"/>
</dbReference>
<dbReference type="GO" id="GO:0003677">
    <property type="term" value="F:DNA binding"/>
    <property type="evidence" value="ECO:0007669"/>
    <property type="project" value="UniProtKB-KW"/>
</dbReference>
<dbReference type="GO" id="GO:0000287">
    <property type="term" value="F:magnesium ion binding"/>
    <property type="evidence" value="ECO:0007669"/>
    <property type="project" value="UniProtKB-UniRule"/>
</dbReference>
<dbReference type="GO" id="GO:0006310">
    <property type="term" value="P:DNA recombination"/>
    <property type="evidence" value="ECO:0007669"/>
    <property type="project" value="UniProtKB-UniRule"/>
</dbReference>
<dbReference type="GO" id="GO:0006281">
    <property type="term" value="P:DNA repair"/>
    <property type="evidence" value="ECO:0007669"/>
    <property type="project" value="UniProtKB-UniRule"/>
</dbReference>
<dbReference type="CDD" id="cd16962">
    <property type="entry name" value="RuvC"/>
    <property type="match status" value="1"/>
</dbReference>
<dbReference type="FunFam" id="3.30.420.10:FF:000002">
    <property type="entry name" value="Crossover junction endodeoxyribonuclease RuvC"/>
    <property type="match status" value="1"/>
</dbReference>
<dbReference type="Gene3D" id="3.30.420.10">
    <property type="entry name" value="Ribonuclease H-like superfamily/Ribonuclease H"/>
    <property type="match status" value="1"/>
</dbReference>
<dbReference type="HAMAP" id="MF_00034">
    <property type="entry name" value="RuvC"/>
    <property type="match status" value="1"/>
</dbReference>
<dbReference type="InterPro" id="IPR012337">
    <property type="entry name" value="RNaseH-like_sf"/>
</dbReference>
<dbReference type="InterPro" id="IPR036397">
    <property type="entry name" value="RNaseH_sf"/>
</dbReference>
<dbReference type="InterPro" id="IPR002176">
    <property type="entry name" value="X-over_junc_endoDNase_RuvC"/>
</dbReference>
<dbReference type="PANTHER" id="PTHR30194">
    <property type="entry name" value="CROSSOVER JUNCTION ENDODEOXYRIBONUCLEASE RUVC"/>
    <property type="match status" value="1"/>
</dbReference>
<dbReference type="PANTHER" id="PTHR30194:SF3">
    <property type="entry name" value="CROSSOVER JUNCTION ENDODEOXYRIBONUCLEASE RUVC"/>
    <property type="match status" value="1"/>
</dbReference>
<dbReference type="Pfam" id="PF02075">
    <property type="entry name" value="RuvC"/>
    <property type="match status" value="1"/>
</dbReference>
<dbReference type="PRINTS" id="PR00696">
    <property type="entry name" value="RSOLVASERUVC"/>
</dbReference>
<dbReference type="SUPFAM" id="SSF53098">
    <property type="entry name" value="Ribonuclease H-like"/>
    <property type="match status" value="1"/>
</dbReference>
<reference key="1">
    <citation type="journal article" date="2006" name="PLoS Genet.">
        <title>Comparative genomics of emerging human ehrlichiosis agents.</title>
        <authorList>
            <person name="Dunning Hotopp J.C."/>
            <person name="Lin M."/>
            <person name="Madupu R."/>
            <person name="Crabtree J."/>
            <person name="Angiuoli S.V."/>
            <person name="Eisen J.A."/>
            <person name="Seshadri R."/>
            <person name="Ren Q."/>
            <person name="Wu M."/>
            <person name="Utterback T.R."/>
            <person name="Smith S."/>
            <person name="Lewis M."/>
            <person name="Khouri H."/>
            <person name="Zhang C."/>
            <person name="Niu H."/>
            <person name="Lin Q."/>
            <person name="Ohashi N."/>
            <person name="Zhi N."/>
            <person name="Nelson W.C."/>
            <person name="Brinkac L.M."/>
            <person name="Dodson R.J."/>
            <person name="Rosovitz M.J."/>
            <person name="Sundaram J.P."/>
            <person name="Daugherty S.C."/>
            <person name="Davidsen T."/>
            <person name="Durkin A.S."/>
            <person name="Gwinn M.L."/>
            <person name="Haft D.H."/>
            <person name="Selengut J.D."/>
            <person name="Sullivan S.A."/>
            <person name="Zafar N."/>
            <person name="Zhou L."/>
            <person name="Benahmed F."/>
            <person name="Forberger H."/>
            <person name="Halpin R."/>
            <person name="Mulligan S."/>
            <person name="Robinson J."/>
            <person name="White O."/>
            <person name="Rikihisa Y."/>
            <person name="Tettelin H."/>
        </authorList>
    </citation>
    <scope>NUCLEOTIDE SEQUENCE [LARGE SCALE GENOMIC DNA]</scope>
    <source>
        <strain>ATCC VR-367 / Miyayama</strain>
    </source>
</reference>
<feature type="chain" id="PRO_1000195266" description="Crossover junction endodeoxyribonuclease RuvC">
    <location>
        <begin position="1"/>
        <end position="166"/>
    </location>
</feature>
<feature type="active site" evidence="1">
    <location>
        <position position="9"/>
    </location>
</feature>
<feature type="active site" evidence="1">
    <location>
        <position position="70"/>
    </location>
</feature>
<feature type="active site" evidence="1">
    <location>
        <position position="144"/>
    </location>
</feature>
<feature type="binding site" evidence="1">
    <location>
        <position position="9"/>
    </location>
    <ligand>
        <name>Mg(2+)</name>
        <dbReference type="ChEBI" id="CHEBI:18420"/>
        <label>1</label>
    </ligand>
</feature>
<feature type="binding site" evidence="1">
    <location>
        <position position="70"/>
    </location>
    <ligand>
        <name>Mg(2+)</name>
        <dbReference type="ChEBI" id="CHEBI:18420"/>
        <label>2</label>
    </ligand>
</feature>
<feature type="binding site" evidence="1">
    <location>
        <position position="144"/>
    </location>
    <ligand>
        <name>Mg(2+)</name>
        <dbReference type="ChEBI" id="CHEBI:18420"/>
        <label>1</label>
    </ligand>
</feature>
<gene>
    <name evidence="1" type="primary">ruvC</name>
    <name type="ordered locus">NSE_0955</name>
</gene>